<gene>
    <name evidence="7 8 13" type="primary">Mrjp6</name>
    <name evidence="11" type="synonym">406149</name>
    <name evidence="8" type="synonym">GB13789</name>
</gene>
<protein>
    <recommendedName>
        <fullName evidence="7">Major royal jelly protein 6</fullName>
    </recommendedName>
    <alternativeName>
        <fullName evidence="9">Bee-milk protein Mrjp6</fullName>
    </alternativeName>
</protein>
<sequence length="437" mass="49786">MTNWLLLIVCLSIACQDVTSAIHQRKSSKNLEHSMNVIHEWKYIDYDFGSDEKRQAAIQSGEYDYTKNYPFDVDQWHNKTFLAVIRYDGVPSSLNVISEKIGNGGCLLQPYPDWSWANYKDCSGIVSAYKIAIDKFDRLWVLDSGLINNIQLMCSPKLLAFDLNTSKLLKQIEIPHNIAVNASTGMGGPVSLVVQAMDPMNTTVYIADDRGDALIIYQNSDDSFHRLTSKTFDNDLRYSELAVAGESFTVHDGIFGMALSPVTNNLYYSPLTSHSLYYVNMEPFMKSQYEENNIEYEGIQDIFNTQSSAKVMSKNGVLFFGLVNNSAIGCWNEHQPLQRQNMDMVAQNEKTLQMIISVKIIQNLAYSGRMNRIHKNEYMLALSNRMQKIVNNDFNFDEVNFRILGANVNNLIKNTRCAKSNNQNNNQNKYKNQAHLD</sequence>
<accession>A0A8U0WQ84</accession>
<accession>A0A8B6WZ10</accession>
<accession>Q6W3E3</accession>
<organism evidence="12">
    <name type="scientific">Apis mellifera</name>
    <name type="common">Honeybee</name>
    <dbReference type="NCBI Taxonomy" id="7460"/>
    <lineage>
        <taxon>Eukaryota</taxon>
        <taxon>Metazoa</taxon>
        <taxon>Ecdysozoa</taxon>
        <taxon>Arthropoda</taxon>
        <taxon>Hexapoda</taxon>
        <taxon>Insecta</taxon>
        <taxon>Pterygota</taxon>
        <taxon>Neoptera</taxon>
        <taxon>Endopterygota</taxon>
        <taxon>Hymenoptera</taxon>
        <taxon>Apocrita</taxon>
        <taxon>Aculeata</taxon>
        <taxon>Apoidea</taxon>
        <taxon>Anthophila</taxon>
        <taxon>Apidae</taxon>
        <taxon>Apis</taxon>
    </lineage>
</organism>
<reference evidence="10 13" key="1">
    <citation type="journal article" date="2004" name="J. Insect Physiol.">
        <title>The MRJP/YELLOW protein family of Apis mellifera: identification of new members in the EST library.</title>
        <authorList>
            <person name="Albert S."/>
            <person name="Klaudiny J."/>
        </authorList>
    </citation>
    <scope>NUCLEOTIDE SEQUENCE [MRNA]</scope>
</reference>
<reference evidence="13" key="2">
    <citation type="journal article" date="2006" name="Nature">
        <title>Insights into social insects from the genome of the honeybee Apis mellifera.</title>
        <authorList>
            <consortium name="Honeybee genome sequencing consortium"/>
        </authorList>
    </citation>
    <scope>NUCLEOTIDE SEQUENCE [LARGE SCALE GENOMIC DNA]</scope>
</reference>
<reference evidence="13" key="3">
    <citation type="journal article" date="2014" name="BMC Genomics">
        <title>Finding the missing honey bee genes: lessons learned from a genome upgrade.</title>
        <authorList>
            <consortium name="HGSC production teams"/>
            <consortium name="Honey Bee Genome Sequencing Consortium"/>
            <person name="Elsik C.G."/>
            <person name="Worley K.C."/>
            <person name="Bennett A.K."/>
            <person name="Beye M."/>
            <person name="Camara F."/>
            <person name="Childers C.P."/>
            <person name="de Graaf D.C."/>
            <person name="Debyser G."/>
            <person name="Deng J."/>
            <person name="Devreese B."/>
            <person name="Elhaik E."/>
            <person name="Evans J.D."/>
            <person name="Foster L.J."/>
            <person name="Graur D."/>
            <person name="Guigo R."/>
            <person name="Hoff K.J."/>
            <person name="Holder M.E."/>
            <person name="Hudson M.E."/>
            <person name="Hunt G.J."/>
            <person name="Jiang H."/>
            <person name="Joshi V."/>
            <person name="Khetani R.S."/>
            <person name="Kosarev P."/>
            <person name="Kovar C.L."/>
            <person name="Ma J."/>
            <person name="Maleszka R."/>
            <person name="Moritz R.F."/>
            <person name="Munoz-Torres M.C."/>
            <person name="Murphy T.D."/>
            <person name="Muzny D.M."/>
            <person name="Newsham I.F."/>
            <person name="Reese J.T."/>
            <person name="Robertson H.M."/>
            <person name="Robinson G.E."/>
            <person name="Rueppell O."/>
            <person name="Solovyev V."/>
            <person name="Stanke M."/>
            <person name="Stolle E."/>
            <person name="Tsuruda J.M."/>
            <person name="Vaerenbergh M.V."/>
            <person name="Waterhouse R.M."/>
            <person name="Weaver D.B."/>
            <person name="Whitfield C.W."/>
            <person name="Wu Y."/>
            <person name="Zdobnov E.M."/>
            <person name="Zhang L."/>
            <person name="Zhu D."/>
            <person name="Gibbs R.A."/>
        </authorList>
    </citation>
    <scope>NUCLEOTIDE SEQUENCE [LARGE SCALE GENOMIC DNA]</scope>
</reference>
<reference evidence="13" key="4">
    <citation type="submission" date="2024-08" db="UniProtKB">
        <authorList>
            <consortium name="RefSeq"/>
        </authorList>
    </citation>
    <scope>IDENTIFICATION</scope>
    <source>
        <strain evidence="13">DH4</strain>
    </source>
</reference>
<reference evidence="9" key="5">
    <citation type="journal article" date="2005" name="Insect Biochem. Mol. Biol.">
        <title>Profiling the proteome complement of the secretion from hypopharyngeal gland of Africanized nurse-honeybees (Apis mellifera L.).</title>
        <authorList>
            <person name="Santos K.S."/>
            <person name="dos Santos L.D."/>
            <person name="Mendes M.A."/>
            <person name="de Souza B.M."/>
            <person name="Malaspina O."/>
            <person name="Palma M.S."/>
        </authorList>
    </citation>
    <scope>FUNCTION</scope>
    <scope>SUBCELLULAR LOCATION</scope>
    <scope>TISSUE SPECIFICITY</scope>
</reference>
<reference evidence="13" key="6">
    <citation type="journal article" date="2006" name="Genome Res.">
        <title>Evolution of the Yellow/Major Royal Jelly Protein family and the emergence of social behavior in honey bees.</title>
        <authorList>
            <person name="Drapeau M.D."/>
            <person name="Albert S."/>
            <person name="Kucharski R."/>
            <person name="Prusko C."/>
            <person name="Maleszka R."/>
        </authorList>
    </citation>
    <scope>IDENTIFICATION</scope>
</reference>
<reference evidence="9" key="7">
    <citation type="journal article" date="2018" name="Insects">
        <title>Transcriptional Control of Honey Bee (Apis mellifera) Major Royal Jelly Proteins by 20-Hydroxyecdysone.</title>
        <authorList>
            <person name="Winkler P."/>
            <person name="Sieg F."/>
            <person name="Buttstedt A."/>
        </authorList>
    </citation>
    <scope>ABSENCE OF INDUCTION BY 20-HYDROXYECDYSONE</scope>
</reference>
<reference evidence="9" key="8">
    <citation type="journal article" date="2019" name="Ecol. Evol.">
        <title>The rise and fall of major royal jelly proteins during a honeybee (Apis mellifera) workers' life.</title>
        <authorList>
            <person name="Dobritzsch D."/>
            <person name="Aumer D."/>
            <person name="Fuszard M."/>
            <person name="Erler S."/>
            <person name="Buttstedt A."/>
        </authorList>
    </citation>
    <scope>FUNCTION</scope>
    <scope>SUBCELLULAR LOCATION</scope>
    <scope>TISSUE SPECIFICITY</scope>
    <scope>IDENTIFICATION BY MASS SPECTROMETRY</scope>
</reference>
<reference evidence="9" key="9">
    <citation type="journal article" date="2021" name="Insects">
        <title>Upregulation of Transferrin and Major Royal Jelly Proteins in the Spermathecal Fluid of Mated Honeybee (Apis mellifera) Queens.</title>
        <authorList>
            <person name="Park H.G."/>
            <person name="Kim B.Y."/>
            <person name="Kim J.M."/>
            <person name="Choi Y.S."/>
            <person name="Yoon H.J."/>
            <person name="Lee K.S."/>
            <person name="Jin B.R."/>
        </authorList>
    </citation>
    <scope>FUNCTION</scope>
    <scope>TISSUE SPECIFICITY</scope>
</reference>
<keyword id="KW-0325">Glycoprotein</keyword>
<keyword id="KW-1185">Reference proteome</keyword>
<keyword id="KW-0964">Secreted</keyword>
<keyword id="KW-0732">Signal</keyword>
<evidence type="ECO:0000255" key="1"/>
<evidence type="ECO:0000255" key="2">
    <source>
        <dbReference type="PROSITE-ProRule" id="PRU00498"/>
    </source>
</evidence>
<evidence type="ECO:0000269" key="3">
    <source>
    </source>
</evidence>
<evidence type="ECO:0000269" key="4">
    <source>
    </source>
</evidence>
<evidence type="ECO:0000269" key="5">
    <source>
    </source>
</evidence>
<evidence type="ECO:0000269" key="6">
    <source>
    </source>
</evidence>
<evidence type="ECO:0000303" key="7">
    <source>
    </source>
</evidence>
<evidence type="ECO:0000303" key="8">
    <source>
    </source>
</evidence>
<evidence type="ECO:0000305" key="9"/>
<evidence type="ECO:0000312" key="10">
    <source>
        <dbReference type="EMBL" id="AAQ82184.1"/>
    </source>
</evidence>
<evidence type="ECO:0000312" key="11">
    <source>
        <dbReference type="EnsemblMetazoa" id="NP_001011622"/>
    </source>
</evidence>
<evidence type="ECO:0000312" key="12">
    <source>
        <dbReference type="Proteomes" id="UP000005203"/>
    </source>
</evidence>
<evidence type="ECO:0000312" key="13">
    <source>
        <dbReference type="RefSeq" id="NP_001011622.1"/>
    </source>
</evidence>
<comment type="function">
    <text evidence="3 5 6 9">Component of royal jelly, a substance produced in the hypopharyngeal gland containing proteins, free amino acids, fatty acids, sugars and other nutrients, which is fed to developing larvae by worker nurse bees (PubMed:15607658, PubMed:31410279). All larvae are fed some royal jelly (also known as worker jelly) early in their development but it forms the principal source of nutrition for larvae destined to become queen bees (Probable). Produced in the spermatheca of adult queen bees, along with other major royal jelly proteins, where it may act as a nutrient supply for sperm stored by mated queens, or be involved in energy metabolism (PubMed:34442256).</text>
</comment>
<comment type="subcellular location">
    <subcellularLocation>
        <location evidence="3 5">Secreted</location>
    </subcellularLocation>
    <text evidence="3 5">Royal jelly.</text>
</comment>
<comment type="tissue specificity">
    <text evidence="3 5 6">Found in and secreted from the hypopharyngeal glands of the worker honey bee (at protein level); expression peaks at 20 days post eclosion (PubMed:15607658, PubMed:31410279). Expressed in the spermatheca of adult queen bees (at protein level); Expression levels are higher in mated queens than in virgin queens (PubMed:34442256). Expressed at low level in the brains of adult worker bees (PubMed:31410279). Protein abundance does not seem to correlate with transcript abundance (PubMed:31410279).</text>
</comment>
<comment type="induction">
    <text evidence="4">Unlike other major royal jelly proteins, not down-regulated by the ecdysteroid 20-hydroxyecdysone (ecdysterone or 20E).</text>
</comment>
<comment type="similarity">
    <text evidence="9">Belongs to the major royal jelly protein family.</text>
</comment>
<dbReference type="EMBL" id="AY313893">
    <property type="protein sequence ID" value="AAQ82184.1"/>
    <property type="molecule type" value="mRNA"/>
</dbReference>
<dbReference type="RefSeq" id="NP_001011622.1">
    <property type="nucleotide sequence ID" value="NM_001011622.1"/>
</dbReference>
<dbReference type="SMR" id="A0A8U0WQ84"/>
<dbReference type="EnsemblMetazoa" id="NM_001011622">
    <property type="protein sequence ID" value="NP_001011622"/>
    <property type="gene ID" value="GeneID_406149"/>
</dbReference>
<dbReference type="GeneID" id="406149"/>
<dbReference type="KEGG" id="ame:406149"/>
<dbReference type="CTD" id="406149"/>
<dbReference type="OrthoDB" id="3199782at2759"/>
<dbReference type="Proteomes" id="UP000005203">
    <property type="component" value="Linkage group LG11"/>
</dbReference>
<dbReference type="GO" id="GO:0005576">
    <property type="term" value="C:extracellular region"/>
    <property type="evidence" value="ECO:0007669"/>
    <property type="project" value="UniProtKB-SubCell"/>
</dbReference>
<dbReference type="Gene3D" id="2.120.10.30">
    <property type="entry name" value="TolB, C-terminal domain"/>
    <property type="match status" value="1"/>
</dbReference>
<dbReference type="InterPro" id="IPR011042">
    <property type="entry name" value="6-blade_b-propeller_TolB-like"/>
</dbReference>
<dbReference type="InterPro" id="IPR017996">
    <property type="entry name" value="Royal_jelly/protein_yellow"/>
</dbReference>
<dbReference type="PANTHER" id="PTHR10009:SF7">
    <property type="entry name" value="GH10609P-RELATED"/>
    <property type="match status" value="1"/>
</dbReference>
<dbReference type="PANTHER" id="PTHR10009">
    <property type="entry name" value="PROTEIN YELLOW-RELATED"/>
    <property type="match status" value="1"/>
</dbReference>
<dbReference type="Pfam" id="PF03022">
    <property type="entry name" value="MRJP"/>
    <property type="match status" value="1"/>
</dbReference>
<dbReference type="PRINTS" id="PR01366">
    <property type="entry name" value="ROYALJELLY"/>
</dbReference>
<dbReference type="SUPFAM" id="SSF63825">
    <property type="entry name" value="YWTD domain"/>
    <property type="match status" value="1"/>
</dbReference>
<proteinExistence type="evidence at protein level"/>
<name>MRJP6_APIME</name>
<feature type="signal peptide" evidence="1">
    <location>
        <begin position="1"/>
        <end position="20"/>
    </location>
</feature>
<feature type="chain" id="PRO_5035543960" description="Major royal jelly protein 6" evidence="1">
    <location>
        <begin position="21"/>
        <end position="437"/>
    </location>
</feature>
<feature type="glycosylation site" description="N-linked (GlcNAc...) asparagine" evidence="2">
    <location>
        <position position="78"/>
    </location>
</feature>
<feature type="glycosylation site" description="N-linked (GlcNAc...) asparagine" evidence="2">
    <location>
        <position position="164"/>
    </location>
</feature>
<feature type="glycosylation site" description="N-linked (GlcNAc...) asparagine" evidence="2">
    <location>
        <position position="181"/>
    </location>
</feature>
<feature type="glycosylation site" description="N-linked (GlcNAc...) asparagine" evidence="2">
    <location>
        <position position="201"/>
    </location>
</feature>
<feature type="glycosylation site" description="N-linked (GlcNAc...) asparagine" evidence="2">
    <location>
        <position position="324"/>
    </location>
</feature>